<organism>
    <name type="scientific">Vesicular stomatitis Indiana virus (strain 98COE North America)</name>
    <name type="common">VSIV</name>
    <dbReference type="NCBI Taxonomy" id="434488"/>
    <lineage>
        <taxon>Viruses</taxon>
        <taxon>Riboviria</taxon>
        <taxon>Orthornavirae</taxon>
        <taxon>Negarnaviricota</taxon>
        <taxon>Haploviricotina</taxon>
        <taxon>Monjiviricetes</taxon>
        <taxon>Mononegavirales</taxon>
        <taxon>Rhabdoviridae</taxon>
        <taxon>Alpharhabdovirinae</taxon>
        <taxon>Vesiculovirus</taxon>
        <taxon>Vesiculovirus indiana</taxon>
    </lineage>
</organism>
<gene>
    <name type="primary">N</name>
</gene>
<reference key="1">
    <citation type="journal article" date="2002" name="J. Gen. Virol.">
        <title>Full-length genome analysis of natural isolates of vesicular stomatitis virus (Indiana 1 serotype) from North, Central and South America.</title>
        <authorList>
            <person name="Rodriguez L.L."/>
            <person name="Pauszek S.J."/>
            <person name="Bunch T.A."/>
            <person name="Schumann K.R."/>
        </authorList>
    </citation>
    <scope>NUCLEOTIDE SEQUENCE [GENOMIC RNA]</scope>
</reference>
<reference evidence="4 5" key="2">
    <citation type="journal article" date="2009" name="Proc. Natl. Acad. Sci. U.S.A.">
        <title>Structure of the vesicular stomatitis virus nucleocapsid in complex with the nucleocapsid-binding domain of the small polymerase cofactor, P.</title>
        <authorList>
            <person name="Green T.J."/>
            <person name="Luo M."/>
        </authorList>
    </citation>
    <scope>X-RAY CRYSTALLOGRAPHY (2.70 ANGSTROMS) OF 2-422 IN COMPLEX WITH THE C-TERMINUS OF THE PHOSPHOPROTEIN</scope>
    <scope>INTERACTION WITH THE PHOSPHOPROTEIN</scope>
    <scope>MUTAGENESIS OF SER-290</scope>
</reference>
<sequence length="422" mass="47409">MSVTVKRIIDNTVIVPKLPANEDPVEYPADYFRKSKEIPLYINTTKSLSDLRGYVYQGLKSGNVSIIHVNSYLYGALKDIRGKLDKDWSSFGINIGKAGDTIGIFDLVSLKALDGVLPDGVSDASRTSADDKWLPLYLLGLYRVGRTQMPEYRKKLMDGLTNQCKMINEQFEPLVPEGRDIFDVWGNDSNYTKIVAAVDMFFHMFKKHECASFRYGTIVSRFKDCAALATFGHLCKITGMSTEDVTTWILNREVADEMVQMMLPGQEIDKADSYMPYLIDFGLSSKSPYSSVKNPAFHFWGQLTALLLRSTRARNARQPDDIEYTSLTTAGLLYAYAVGSSADLAQQFCVGDNKYTPDDSTGGLTTNAPPQGRDVVEWLGWFEDQNRKPTPDMMQYAKRAVMSLQGLREKTIGKYAKSEFDK</sequence>
<evidence type="ECO:0000250" key="1">
    <source>
        <dbReference type="UniProtKB" id="P03521"/>
    </source>
</evidence>
<evidence type="ECO:0000269" key="2">
    <source>
    </source>
</evidence>
<evidence type="ECO:0000305" key="3"/>
<evidence type="ECO:0007744" key="4">
    <source>
        <dbReference type="PDB" id="3HHW"/>
    </source>
</evidence>
<evidence type="ECO:0007744" key="5">
    <source>
        <dbReference type="PDB" id="3HHZ"/>
    </source>
</evidence>
<evidence type="ECO:0007829" key="6">
    <source>
        <dbReference type="PDB" id="3HHW"/>
    </source>
</evidence>
<evidence type="ECO:0007829" key="7">
    <source>
        <dbReference type="PDB" id="3HHZ"/>
    </source>
</evidence>
<keyword id="KW-0002">3D-structure</keyword>
<keyword id="KW-0167">Capsid protein</keyword>
<keyword id="KW-1139">Helical capsid protein</keyword>
<keyword id="KW-1035">Host cytoplasm</keyword>
<keyword id="KW-0687">Ribonucleoprotein</keyword>
<keyword id="KW-0694">RNA-binding</keyword>
<keyword id="KW-0543">Viral nucleoprotein</keyword>
<keyword id="KW-0946">Virion</keyword>
<comment type="function">
    <text evidence="1">Encapsidates the genome in a ratio of one N per nine ribonucleotides, protecting it from nucleases. The encapsidated genomic RNA is termed the NC and serves as template for transcription and replication. The nucleocapsid is bullet-shaped with the tip containing 8 turns of a conical spiral before reaching the helical cylindrical trunk. Nucleocapsid assembly is concomitant with replication, therefore viral replication depends on the intracellular concentration of free N, termed N(0). All replicative products are resistant to nucleases.</text>
</comment>
<comment type="subunit">
    <text evidence="1">Homomultimerizes to form the nucleocapsid. Binds to viral genomic RNA; this interaction contributes to the virion assembly. N in the nucleocapsid interacts (via C-terminus) with the P protein (via C-terminus); this interaction allows to package the L polymerase in the virion and positions the polymerase on the template, since P acts as a bridge between N and L. N(0) interacts with the P protein; this interaction prevents the uncontrolled aggregation of N(0). Interacts with the matrix protein (inner layer); this interaction contributes to the virion assembly. Interacts with the L polymerase.</text>
</comment>
<comment type="subcellular location">
    <subcellularLocation>
        <location evidence="1">Virion</location>
    </subcellularLocation>
    <subcellularLocation>
        <location evidence="1">Host cytoplasm</location>
    </subcellularLocation>
    <text evidence="1">The nucleocapsid is synthesized in the cytoplasm, and is subsequently transported via microtubules to the cell periphery. About 1240 copies of N are present in the virion.</text>
</comment>
<comment type="similarity">
    <text evidence="3">Belongs to the vesiculovirus nucleocapsid protein family.</text>
</comment>
<proteinExistence type="evidence at protein level"/>
<protein>
    <recommendedName>
        <fullName>Nucleoprotein</fullName>
        <shortName>NP</shortName>
    </recommendedName>
    <alternativeName>
        <fullName>Nucleocapsid protein</fullName>
        <shortName>Protein N</shortName>
    </alternativeName>
</protein>
<feature type="chain" id="PRO_0000287270" description="Nucleoprotein">
    <location>
        <begin position="1"/>
        <end position="422"/>
    </location>
</feature>
<feature type="region of interest" description="Interaction with the phosphoprotein" evidence="1">
    <location>
        <begin position="350"/>
        <end position="390"/>
    </location>
</feature>
<feature type="binding site" evidence="1">
    <location>
        <position position="143"/>
    </location>
    <ligand>
        <name>RNA</name>
        <dbReference type="ChEBI" id="CHEBI:33697"/>
    </ligand>
</feature>
<feature type="binding site" evidence="1">
    <location>
        <position position="152"/>
    </location>
    <ligand>
        <name>RNA</name>
        <dbReference type="ChEBI" id="CHEBI:33697"/>
    </ligand>
</feature>
<feature type="binding site" evidence="1">
    <location>
        <position position="206"/>
    </location>
    <ligand>
        <name>RNA</name>
        <dbReference type="ChEBI" id="CHEBI:33697"/>
    </ligand>
</feature>
<feature type="binding site" evidence="1">
    <location>
        <position position="214"/>
    </location>
    <ligand>
        <name>RNA</name>
        <dbReference type="ChEBI" id="CHEBI:33697"/>
    </ligand>
</feature>
<feature type="binding site" evidence="1">
    <location>
        <position position="286"/>
    </location>
    <ligand>
        <name>RNA</name>
        <dbReference type="ChEBI" id="CHEBI:33697"/>
    </ligand>
</feature>
<feature type="binding site" evidence="1">
    <location>
        <position position="317"/>
    </location>
    <ligand>
        <name>RNA</name>
        <dbReference type="ChEBI" id="CHEBI:33697"/>
    </ligand>
</feature>
<feature type="binding site" evidence="1">
    <location>
        <position position="408"/>
    </location>
    <ligand>
        <name>RNA</name>
        <dbReference type="ChEBI" id="CHEBI:33697"/>
    </ligand>
</feature>
<feature type="mutagenesis site" description="Loss of RNA-binding." evidence="2">
    <original>S</original>
    <variation>W</variation>
    <location>
        <position position="290"/>
    </location>
</feature>
<feature type="strand" evidence="6">
    <location>
        <begin position="5"/>
        <end position="7"/>
    </location>
</feature>
<feature type="turn" evidence="6">
    <location>
        <begin position="8"/>
        <end position="10"/>
    </location>
</feature>
<feature type="helix" evidence="6">
    <location>
        <begin position="28"/>
        <end position="30"/>
    </location>
</feature>
<feature type="turn" evidence="6">
    <location>
        <begin position="31"/>
        <end position="34"/>
    </location>
</feature>
<feature type="strand" evidence="6">
    <location>
        <begin position="40"/>
        <end position="42"/>
    </location>
</feature>
<feature type="helix" evidence="6">
    <location>
        <begin position="48"/>
        <end position="60"/>
    </location>
</feature>
<feature type="helix" evidence="6">
    <location>
        <begin position="66"/>
        <end position="77"/>
    </location>
</feature>
<feature type="strand" evidence="6">
    <location>
        <begin position="81"/>
        <end position="83"/>
    </location>
</feature>
<feature type="strand" evidence="6">
    <location>
        <begin position="88"/>
        <end position="90"/>
    </location>
</feature>
<feature type="strand" evidence="6">
    <location>
        <begin position="93"/>
        <end position="96"/>
    </location>
</feature>
<feature type="strand" evidence="6">
    <location>
        <begin position="101"/>
        <end position="104"/>
    </location>
</feature>
<feature type="strand" evidence="6">
    <location>
        <begin position="109"/>
        <end position="111"/>
    </location>
</feature>
<feature type="helix" evidence="6">
    <location>
        <begin position="130"/>
        <end position="144"/>
    </location>
</feature>
<feature type="helix" evidence="6">
    <location>
        <begin position="154"/>
        <end position="157"/>
    </location>
</feature>
<feature type="turn" evidence="6">
    <location>
        <begin position="158"/>
        <end position="160"/>
    </location>
</feature>
<feature type="helix" evidence="6">
    <location>
        <begin position="161"/>
        <end position="166"/>
    </location>
</feature>
<feature type="turn" evidence="6">
    <location>
        <begin position="175"/>
        <end position="177"/>
    </location>
</feature>
<feature type="helix" evidence="6">
    <location>
        <begin position="178"/>
        <end position="181"/>
    </location>
</feature>
<feature type="helix" evidence="6">
    <location>
        <begin position="183"/>
        <end position="187"/>
    </location>
</feature>
<feature type="helix" evidence="6">
    <location>
        <begin position="189"/>
        <end position="204"/>
    </location>
</feature>
<feature type="helix" evidence="6">
    <location>
        <begin position="211"/>
        <end position="215"/>
    </location>
</feature>
<feature type="helix" evidence="6">
    <location>
        <begin position="218"/>
        <end position="220"/>
    </location>
</feature>
<feature type="turn" evidence="6">
    <location>
        <begin position="221"/>
        <end position="224"/>
    </location>
</feature>
<feature type="helix" evidence="6">
    <location>
        <begin position="226"/>
        <end position="238"/>
    </location>
</feature>
<feature type="helix" evidence="6">
    <location>
        <begin position="242"/>
        <end position="247"/>
    </location>
</feature>
<feature type="helix" evidence="6">
    <location>
        <begin position="252"/>
        <end position="261"/>
    </location>
</feature>
<feature type="strand" evidence="6">
    <location>
        <begin position="264"/>
        <end position="266"/>
    </location>
</feature>
<feature type="helix" evidence="6">
    <location>
        <begin position="275"/>
        <end position="277"/>
    </location>
</feature>
<feature type="turn" evidence="6">
    <location>
        <begin position="278"/>
        <end position="282"/>
    </location>
</feature>
<feature type="helix" evidence="6">
    <location>
        <begin position="291"/>
        <end position="293"/>
    </location>
</feature>
<feature type="helix" evidence="6">
    <location>
        <begin position="295"/>
        <end position="307"/>
    </location>
</feature>
<feature type="helix" evidence="6">
    <location>
        <begin position="313"/>
        <end position="315"/>
    </location>
</feature>
<feature type="strand" evidence="6">
    <location>
        <begin position="320"/>
        <end position="322"/>
    </location>
</feature>
<feature type="helix" evidence="6">
    <location>
        <begin position="324"/>
        <end position="340"/>
    </location>
</feature>
<feature type="strand" evidence="7">
    <location>
        <begin position="348"/>
        <end position="351"/>
    </location>
</feature>
<feature type="strand" evidence="7">
    <location>
        <begin position="357"/>
        <end position="360"/>
    </location>
</feature>
<feature type="helix" evidence="6">
    <location>
        <begin position="375"/>
        <end position="384"/>
    </location>
</feature>
<feature type="turn" evidence="6">
    <location>
        <begin position="385"/>
        <end position="387"/>
    </location>
</feature>
<feature type="helix" evidence="6">
    <location>
        <begin position="391"/>
        <end position="401"/>
    </location>
</feature>
<feature type="strand" evidence="6">
    <location>
        <begin position="409"/>
        <end position="411"/>
    </location>
</feature>
<feature type="helix" evidence="6">
    <location>
        <begin position="412"/>
        <end position="420"/>
    </location>
</feature>
<organismHost>
    <name type="scientific">Aedes</name>
    <dbReference type="NCBI Taxonomy" id="7158"/>
</organismHost>
<organismHost>
    <name type="scientific">Bos taurus</name>
    <name type="common">Bovine</name>
    <dbReference type="NCBI Taxonomy" id="9913"/>
</organismHost>
<organismHost>
    <name type="scientific">Culicoides</name>
    <dbReference type="NCBI Taxonomy" id="58271"/>
</organismHost>
<organismHost>
    <name type="scientific">Equus asinus</name>
    <name type="common">Donkey</name>
    <name type="synonym">Equus africanus asinus</name>
    <dbReference type="NCBI Taxonomy" id="9793"/>
</organismHost>
<organismHost>
    <name type="scientific">Equus caballus</name>
    <name type="common">Horse</name>
    <dbReference type="NCBI Taxonomy" id="9796"/>
</organismHost>
<organismHost>
    <name type="scientific">Homo sapiens</name>
    <name type="common">Human</name>
    <dbReference type="NCBI Taxonomy" id="9606"/>
</organismHost>
<organismHost>
    <name type="scientific">Lutzomyia</name>
    <dbReference type="NCBI Taxonomy" id="252607"/>
</organismHost>
<organismHost>
    <name type="scientific">Musca domestica</name>
    <name type="common">House fly</name>
    <dbReference type="NCBI Taxonomy" id="7370"/>
</organismHost>
<organismHost>
    <name type="scientific">Simuliidae</name>
    <name type="common">black flies</name>
    <dbReference type="NCBI Taxonomy" id="7190"/>
</organismHost>
<organismHost>
    <name type="scientific">Sus scrofa</name>
    <name type="common">Pig</name>
    <dbReference type="NCBI Taxonomy" id="9823"/>
</organismHost>
<accession>Q77E03</accession>
<dbReference type="EMBL" id="AF473864">
    <property type="protein sequence ID" value="AAN16980.1"/>
    <property type="molecule type" value="Genomic_RNA"/>
</dbReference>
<dbReference type="RefSeq" id="NP_041712.1">
    <property type="nucleotide sequence ID" value="NC_001560.1"/>
</dbReference>
<dbReference type="PDB" id="3HHW">
    <property type="method" value="X-ray"/>
    <property type="resolution" value="2.70 A"/>
    <property type="chains" value="K/L/M/N/O=2-422"/>
</dbReference>
<dbReference type="PDB" id="3HHZ">
    <property type="method" value="X-ray"/>
    <property type="resolution" value="3.50 A"/>
    <property type="chains" value="K/L/M/N/O=2-422"/>
</dbReference>
<dbReference type="PDBsum" id="3HHW"/>
<dbReference type="PDBsum" id="3HHZ"/>
<dbReference type="SMR" id="Q77E03"/>
<dbReference type="DNASU" id="1489831"/>
<dbReference type="KEGG" id="vg:1489831"/>
<dbReference type="EvolutionaryTrace" id="Q77E03"/>
<dbReference type="Proteomes" id="UP000007624">
    <property type="component" value="Segment"/>
</dbReference>
<dbReference type="GO" id="GO:0019029">
    <property type="term" value="C:helical viral capsid"/>
    <property type="evidence" value="ECO:0007669"/>
    <property type="project" value="UniProtKB-KW"/>
</dbReference>
<dbReference type="GO" id="GO:0030430">
    <property type="term" value="C:host cell cytoplasm"/>
    <property type="evidence" value="ECO:0007669"/>
    <property type="project" value="UniProtKB-SubCell"/>
</dbReference>
<dbReference type="GO" id="GO:1990904">
    <property type="term" value="C:ribonucleoprotein complex"/>
    <property type="evidence" value="ECO:0007669"/>
    <property type="project" value="UniProtKB-KW"/>
</dbReference>
<dbReference type="GO" id="GO:0019013">
    <property type="term" value="C:viral nucleocapsid"/>
    <property type="evidence" value="ECO:0007669"/>
    <property type="project" value="UniProtKB-KW"/>
</dbReference>
<dbReference type="GO" id="GO:0003723">
    <property type="term" value="F:RNA binding"/>
    <property type="evidence" value="ECO:0007669"/>
    <property type="project" value="UniProtKB-KW"/>
</dbReference>
<dbReference type="FunFam" id="1.10.3570.10:FF:000001">
    <property type="entry name" value="Nucleoprotein"/>
    <property type="match status" value="1"/>
</dbReference>
<dbReference type="FunFam" id="1.10.3610.10:FF:000001">
    <property type="entry name" value="Nucleoprotein"/>
    <property type="match status" value="1"/>
</dbReference>
<dbReference type="Gene3D" id="1.10.3610.10">
    <property type="entry name" value="Nucleoprotein"/>
    <property type="match status" value="1"/>
</dbReference>
<dbReference type="Gene3D" id="1.10.3570.10">
    <property type="entry name" value="Rhabdovirus nucleocapsid protein like domain"/>
    <property type="match status" value="1"/>
</dbReference>
<dbReference type="InterPro" id="IPR000448">
    <property type="entry name" value="Rhabdo_ncapsid"/>
</dbReference>
<dbReference type="InterPro" id="IPR023331">
    <property type="entry name" value="Rhabdovirus_ncapsid_C"/>
</dbReference>
<dbReference type="InterPro" id="IPR023330">
    <property type="entry name" value="Rhabdovirus_ncapsid_N"/>
</dbReference>
<dbReference type="InterPro" id="IPR035961">
    <property type="entry name" value="Rhabdovirus_nucleoprotein-like"/>
</dbReference>
<dbReference type="Pfam" id="PF00945">
    <property type="entry name" value="Rhabdo_ncap"/>
    <property type="match status" value="1"/>
</dbReference>
<dbReference type="SUPFAM" id="SSF140809">
    <property type="entry name" value="Rhabdovirus nucleoprotein-like"/>
    <property type="match status" value="1"/>
</dbReference>
<name>NCAP_VSIVN</name>